<proteinExistence type="inferred from homology"/>
<comment type="function">
    <text evidence="1">Involved in succinate export with YjjP. Both proteins are required for export.</text>
</comment>
<comment type="subunit">
    <text evidence="1">The transporter is composed of YjjB and YjjP.</text>
</comment>
<comment type="subcellular location">
    <subcellularLocation>
        <location evidence="1">Cell inner membrane</location>
        <topology evidence="1">Multi-pass membrane protein</topology>
    </subcellularLocation>
</comment>
<comment type="similarity">
    <text evidence="1">Belongs to the ThrE exporter (TC 2.A.79) family.</text>
</comment>
<reference key="1">
    <citation type="journal article" date="2009" name="BMC Genomics">
        <title>Pseudogene accumulation in the evolutionary histories of Salmonella enterica serovars Paratyphi A and Typhi.</title>
        <authorList>
            <person name="Holt K.E."/>
            <person name="Thomson N.R."/>
            <person name="Wain J."/>
            <person name="Langridge G.C."/>
            <person name="Hasan R."/>
            <person name="Bhutta Z.A."/>
            <person name="Quail M.A."/>
            <person name="Norbertczak H."/>
            <person name="Walker D."/>
            <person name="Simmonds M."/>
            <person name="White B."/>
            <person name="Bason N."/>
            <person name="Mungall K."/>
            <person name="Dougan G."/>
            <person name="Parkhill J."/>
        </authorList>
    </citation>
    <scope>NUCLEOTIDE SEQUENCE [LARGE SCALE GENOMIC DNA]</scope>
    <source>
        <strain>AKU_12601</strain>
    </source>
</reference>
<name>YJJB_SALPK</name>
<keyword id="KW-0997">Cell inner membrane</keyword>
<keyword id="KW-1003">Cell membrane</keyword>
<keyword id="KW-0472">Membrane</keyword>
<keyword id="KW-0812">Transmembrane</keyword>
<keyword id="KW-1133">Transmembrane helix</keyword>
<keyword id="KW-0813">Transport</keyword>
<accession>B5BKZ9</accession>
<organism>
    <name type="scientific">Salmonella paratyphi A (strain AKU_12601)</name>
    <dbReference type="NCBI Taxonomy" id="554290"/>
    <lineage>
        <taxon>Bacteria</taxon>
        <taxon>Pseudomonadati</taxon>
        <taxon>Pseudomonadota</taxon>
        <taxon>Gammaproteobacteria</taxon>
        <taxon>Enterobacterales</taxon>
        <taxon>Enterobacteriaceae</taxon>
        <taxon>Salmonella</taxon>
    </lineage>
</organism>
<dbReference type="EMBL" id="FM200053">
    <property type="protein sequence ID" value="CAR62345.1"/>
    <property type="molecule type" value="Genomic_DNA"/>
</dbReference>
<dbReference type="RefSeq" id="WP_000511329.1">
    <property type="nucleotide sequence ID" value="NC_011147.1"/>
</dbReference>
<dbReference type="KEGG" id="sek:SSPA4048"/>
<dbReference type="HOGENOM" id="CLU_117642_1_0_6"/>
<dbReference type="Proteomes" id="UP000001869">
    <property type="component" value="Chromosome"/>
</dbReference>
<dbReference type="GO" id="GO:0005886">
    <property type="term" value="C:plasma membrane"/>
    <property type="evidence" value="ECO:0007669"/>
    <property type="project" value="UniProtKB-SubCell"/>
</dbReference>
<dbReference type="GO" id="GO:0015744">
    <property type="term" value="P:succinate transport"/>
    <property type="evidence" value="ECO:0007669"/>
    <property type="project" value="UniProtKB-UniRule"/>
</dbReference>
<dbReference type="HAMAP" id="MF_01191">
    <property type="entry name" value="YjjB"/>
    <property type="match status" value="1"/>
</dbReference>
<dbReference type="InterPro" id="IPR024528">
    <property type="entry name" value="ThrE_2"/>
</dbReference>
<dbReference type="InterPro" id="IPR050539">
    <property type="entry name" value="ThrE_Dicarb/AminoAcid_Exp"/>
</dbReference>
<dbReference type="InterPro" id="IPR020914">
    <property type="entry name" value="YjjB"/>
</dbReference>
<dbReference type="NCBIfam" id="NF007391">
    <property type="entry name" value="PRK09917.1"/>
    <property type="match status" value="1"/>
</dbReference>
<dbReference type="PANTHER" id="PTHR34390:SF1">
    <property type="entry name" value="SUCCINATE TRANSPORTER SUBUNIT YJJB-RELATED"/>
    <property type="match status" value="1"/>
</dbReference>
<dbReference type="PANTHER" id="PTHR34390">
    <property type="entry name" value="UPF0442 PROTEIN YJJB-RELATED"/>
    <property type="match status" value="1"/>
</dbReference>
<dbReference type="Pfam" id="PF12821">
    <property type="entry name" value="ThrE_2"/>
    <property type="match status" value="1"/>
</dbReference>
<gene>
    <name evidence="1" type="primary">yjjB</name>
    <name type="ordered locus">SSPA4048</name>
</gene>
<sequence length="157" mass="17116">MGIIDFLLALMQDMILSAIPAVGFAMVFNVPHRALPWCALLGALGHGSRMLMMSAGFNIEWSTFMASLLVGSIGIQWSRWYLAHPKVFTVAAVIPMFPGISAYTAMISAVKISHLGYSEPMMITLLTNFLKASSIVGALSIGLSVPGLWLYRKRPRV</sequence>
<feature type="chain" id="PRO_1000138375" description="Probable succinate transporter subunit YjjB">
    <location>
        <begin position="1"/>
        <end position="157"/>
    </location>
</feature>
<feature type="transmembrane region" description="Helical" evidence="1">
    <location>
        <begin position="8"/>
        <end position="28"/>
    </location>
</feature>
<feature type="transmembrane region" description="Helical" evidence="1">
    <location>
        <begin position="55"/>
        <end position="75"/>
    </location>
</feature>
<feature type="transmembrane region" description="Helical" evidence="1">
    <location>
        <begin position="87"/>
        <end position="107"/>
    </location>
</feature>
<feature type="transmembrane region" description="Helical" evidence="1">
    <location>
        <begin position="129"/>
        <end position="149"/>
    </location>
</feature>
<evidence type="ECO:0000255" key="1">
    <source>
        <dbReference type="HAMAP-Rule" id="MF_01191"/>
    </source>
</evidence>
<protein>
    <recommendedName>
        <fullName evidence="1">Probable succinate transporter subunit YjjB</fullName>
    </recommendedName>
</protein>